<feature type="chain" id="PRO_0000094338" description="Elongation factor P">
    <location>
        <begin position="1"/>
        <end position="188"/>
    </location>
</feature>
<dbReference type="EMBL" id="BA000030">
    <property type="protein sequence ID" value="BAC74570.1"/>
    <property type="molecule type" value="Genomic_DNA"/>
</dbReference>
<dbReference type="RefSeq" id="WP_010988257.1">
    <property type="nucleotide sequence ID" value="NZ_JZJK01000082.1"/>
</dbReference>
<dbReference type="SMR" id="Q827R5"/>
<dbReference type="GeneID" id="93996543"/>
<dbReference type="KEGG" id="sma:SAVERM_6859"/>
<dbReference type="eggNOG" id="COG0231">
    <property type="taxonomic scope" value="Bacteria"/>
</dbReference>
<dbReference type="HOGENOM" id="CLU_074944_0_1_11"/>
<dbReference type="OrthoDB" id="9801844at2"/>
<dbReference type="UniPathway" id="UPA00345"/>
<dbReference type="Proteomes" id="UP000000428">
    <property type="component" value="Chromosome"/>
</dbReference>
<dbReference type="GO" id="GO:0005737">
    <property type="term" value="C:cytoplasm"/>
    <property type="evidence" value="ECO:0007669"/>
    <property type="project" value="UniProtKB-SubCell"/>
</dbReference>
<dbReference type="GO" id="GO:0003746">
    <property type="term" value="F:translation elongation factor activity"/>
    <property type="evidence" value="ECO:0007669"/>
    <property type="project" value="UniProtKB-UniRule"/>
</dbReference>
<dbReference type="GO" id="GO:0043043">
    <property type="term" value="P:peptide biosynthetic process"/>
    <property type="evidence" value="ECO:0007669"/>
    <property type="project" value="InterPro"/>
</dbReference>
<dbReference type="CDD" id="cd04470">
    <property type="entry name" value="S1_EF-P_repeat_1"/>
    <property type="match status" value="1"/>
</dbReference>
<dbReference type="CDD" id="cd05794">
    <property type="entry name" value="S1_EF-P_repeat_2"/>
    <property type="match status" value="1"/>
</dbReference>
<dbReference type="FunFam" id="2.30.30.30:FF:000003">
    <property type="entry name" value="Elongation factor P"/>
    <property type="match status" value="1"/>
</dbReference>
<dbReference type="FunFam" id="2.40.50.140:FF:000004">
    <property type="entry name" value="Elongation factor P"/>
    <property type="match status" value="1"/>
</dbReference>
<dbReference type="FunFam" id="2.40.50.140:FF:000009">
    <property type="entry name" value="Elongation factor P"/>
    <property type="match status" value="1"/>
</dbReference>
<dbReference type="Gene3D" id="2.30.30.30">
    <property type="match status" value="1"/>
</dbReference>
<dbReference type="Gene3D" id="2.40.50.140">
    <property type="entry name" value="Nucleic acid-binding proteins"/>
    <property type="match status" value="2"/>
</dbReference>
<dbReference type="HAMAP" id="MF_00141">
    <property type="entry name" value="EF_P"/>
    <property type="match status" value="1"/>
</dbReference>
<dbReference type="InterPro" id="IPR015365">
    <property type="entry name" value="Elong-fact-P_C"/>
</dbReference>
<dbReference type="InterPro" id="IPR012340">
    <property type="entry name" value="NA-bd_OB-fold"/>
</dbReference>
<dbReference type="InterPro" id="IPR014722">
    <property type="entry name" value="Rib_uL2_dom2"/>
</dbReference>
<dbReference type="InterPro" id="IPR020599">
    <property type="entry name" value="Transl_elong_fac_P/YeiP"/>
</dbReference>
<dbReference type="InterPro" id="IPR013185">
    <property type="entry name" value="Transl_elong_KOW-like"/>
</dbReference>
<dbReference type="InterPro" id="IPR001059">
    <property type="entry name" value="Transl_elong_P/YeiP_cen"/>
</dbReference>
<dbReference type="InterPro" id="IPR013852">
    <property type="entry name" value="Transl_elong_P/YeiP_CS"/>
</dbReference>
<dbReference type="InterPro" id="IPR011768">
    <property type="entry name" value="Transl_elongation_fac_P"/>
</dbReference>
<dbReference type="InterPro" id="IPR008991">
    <property type="entry name" value="Translation_prot_SH3-like_sf"/>
</dbReference>
<dbReference type="NCBIfam" id="TIGR00038">
    <property type="entry name" value="efp"/>
    <property type="match status" value="1"/>
</dbReference>
<dbReference type="NCBIfam" id="NF001810">
    <property type="entry name" value="PRK00529.1"/>
    <property type="match status" value="1"/>
</dbReference>
<dbReference type="PANTHER" id="PTHR30053">
    <property type="entry name" value="ELONGATION FACTOR P"/>
    <property type="match status" value="1"/>
</dbReference>
<dbReference type="PANTHER" id="PTHR30053:SF12">
    <property type="entry name" value="ELONGATION FACTOR P (EF-P) FAMILY PROTEIN"/>
    <property type="match status" value="1"/>
</dbReference>
<dbReference type="Pfam" id="PF01132">
    <property type="entry name" value="EFP"/>
    <property type="match status" value="1"/>
</dbReference>
<dbReference type="Pfam" id="PF08207">
    <property type="entry name" value="EFP_N"/>
    <property type="match status" value="1"/>
</dbReference>
<dbReference type="Pfam" id="PF09285">
    <property type="entry name" value="Elong-fact-P_C"/>
    <property type="match status" value="1"/>
</dbReference>
<dbReference type="PIRSF" id="PIRSF005901">
    <property type="entry name" value="EF-P"/>
    <property type="match status" value="1"/>
</dbReference>
<dbReference type="SMART" id="SM01185">
    <property type="entry name" value="EFP"/>
    <property type="match status" value="1"/>
</dbReference>
<dbReference type="SMART" id="SM00841">
    <property type="entry name" value="Elong-fact-P_C"/>
    <property type="match status" value="1"/>
</dbReference>
<dbReference type="SUPFAM" id="SSF50249">
    <property type="entry name" value="Nucleic acid-binding proteins"/>
    <property type="match status" value="2"/>
</dbReference>
<dbReference type="SUPFAM" id="SSF50104">
    <property type="entry name" value="Translation proteins SH3-like domain"/>
    <property type="match status" value="1"/>
</dbReference>
<dbReference type="PROSITE" id="PS01275">
    <property type="entry name" value="EFP"/>
    <property type="match status" value="1"/>
</dbReference>
<reference key="1">
    <citation type="journal article" date="2001" name="Proc. Natl. Acad. Sci. U.S.A.">
        <title>Genome sequence of an industrial microorganism Streptomyces avermitilis: deducing the ability of producing secondary metabolites.</title>
        <authorList>
            <person name="Omura S."/>
            <person name="Ikeda H."/>
            <person name="Ishikawa J."/>
            <person name="Hanamoto A."/>
            <person name="Takahashi C."/>
            <person name="Shinose M."/>
            <person name="Takahashi Y."/>
            <person name="Horikawa H."/>
            <person name="Nakazawa H."/>
            <person name="Osonoe T."/>
            <person name="Kikuchi H."/>
            <person name="Shiba T."/>
            <person name="Sakaki Y."/>
            <person name="Hattori M."/>
        </authorList>
    </citation>
    <scope>NUCLEOTIDE SEQUENCE [LARGE SCALE GENOMIC DNA]</scope>
    <source>
        <strain>ATCC 31267 / DSM 46492 / JCM 5070 / NBRC 14893 / NCIMB 12804 / NRRL 8165 / MA-4680</strain>
    </source>
</reference>
<reference key="2">
    <citation type="journal article" date="2003" name="Nat. Biotechnol.">
        <title>Complete genome sequence and comparative analysis of the industrial microorganism Streptomyces avermitilis.</title>
        <authorList>
            <person name="Ikeda H."/>
            <person name="Ishikawa J."/>
            <person name="Hanamoto A."/>
            <person name="Shinose M."/>
            <person name="Kikuchi H."/>
            <person name="Shiba T."/>
            <person name="Sakaki Y."/>
            <person name="Hattori M."/>
            <person name="Omura S."/>
        </authorList>
    </citation>
    <scope>NUCLEOTIDE SEQUENCE [LARGE SCALE GENOMIC DNA]</scope>
    <source>
        <strain>ATCC 31267 / DSM 46492 / JCM 5070 / NBRC 14893 / NCIMB 12804 / NRRL 8165 / MA-4680</strain>
    </source>
</reference>
<evidence type="ECO:0000255" key="1">
    <source>
        <dbReference type="HAMAP-Rule" id="MF_00141"/>
    </source>
</evidence>
<comment type="function">
    <text evidence="1">Involved in peptide bond synthesis. Stimulates efficient translation and peptide-bond synthesis on native or reconstituted 70S ribosomes in vitro. Probably functions indirectly by altering the affinity of the ribosome for aminoacyl-tRNA, thus increasing their reactivity as acceptors for peptidyl transferase.</text>
</comment>
<comment type="pathway">
    <text evidence="1">Protein biosynthesis; polypeptide chain elongation.</text>
</comment>
<comment type="subcellular location">
    <subcellularLocation>
        <location evidence="1">Cytoplasm</location>
    </subcellularLocation>
</comment>
<comment type="similarity">
    <text evidence="1">Belongs to the elongation factor P family.</text>
</comment>
<name>EFP_STRAW</name>
<proteinExistence type="inferred from homology"/>
<organism>
    <name type="scientific">Streptomyces avermitilis (strain ATCC 31267 / DSM 46492 / JCM 5070 / NBRC 14893 / NCIMB 12804 / NRRL 8165 / MA-4680)</name>
    <dbReference type="NCBI Taxonomy" id="227882"/>
    <lineage>
        <taxon>Bacteria</taxon>
        <taxon>Bacillati</taxon>
        <taxon>Actinomycetota</taxon>
        <taxon>Actinomycetes</taxon>
        <taxon>Kitasatosporales</taxon>
        <taxon>Streptomycetaceae</taxon>
        <taxon>Streptomyces</taxon>
    </lineage>
</organism>
<protein>
    <recommendedName>
        <fullName evidence="1">Elongation factor P</fullName>
        <shortName evidence="1">EF-P</shortName>
    </recommendedName>
</protein>
<sequence length="188" mass="20621">MASTNDLKNGLVLKLDGGQLWSVVEFQHVKPGKGPAFVRTKLKNVLSGKVVDKTFNAGVKVETATIDKRDMQFSYMDGEYFVFMDMDTYDQLMVDRKSVGDAANFLIEGFTATVAQHEGEVLFVELPAAVELVIQETEPGVQGDRSTGGTKPATLETGHQIQVPLFITTGEKIKVDTRTSDYLGRVNS</sequence>
<gene>
    <name evidence="1" type="primary">efp</name>
    <name type="ordered locus">SAV_6859</name>
</gene>
<accession>Q827R5</accession>
<keyword id="KW-0963">Cytoplasm</keyword>
<keyword id="KW-0251">Elongation factor</keyword>
<keyword id="KW-0648">Protein biosynthesis</keyword>
<keyword id="KW-1185">Reference proteome</keyword>